<reference key="1">
    <citation type="journal article" date="2009" name="PLoS Genet.">
        <title>Organised genome dynamics in the Escherichia coli species results in highly diverse adaptive paths.</title>
        <authorList>
            <person name="Touchon M."/>
            <person name="Hoede C."/>
            <person name="Tenaillon O."/>
            <person name="Barbe V."/>
            <person name="Baeriswyl S."/>
            <person name="Bidet P."/>
            <person name="Bingen E."/>
            <person name="Bonacorsi S."/>
            <person name="Bouchier C."/>
            <person name="Bouvet O."/>
            <person name="Calteau A."/>
            <person name="Chiapello H."/>
            <person name="Clermont O."/>
            <person name="Cruveiller S."/>
            <person name="Danchin A."/>
            <person name="Diard M."/>
            <person name="Dossat C."/>
            <person name="Karoui M.E."/>
            <person name="Frapy E."/>
            <person name="Garry L."/>
            <person name="Ghigo J.M."/>
            <person name="Gilles A.M."/>
            <person name="Johnson J."/>
            <person name="Le Bouguenec C."/>
            <person name="Lescat M."/>
            <person name="Mangenot S."/>
            <person name="Martinez-Jehanne V."/>
            <person name="Matic I."/>
            <person name="Nassif X."/>
            <person name="Oztas S."/>
            <person name="Petit M.A."/>
            <person name="Pichon C."/>
            <person name="Rouy Z."/>
            <person name="Ruf C.S."/>
            <person name="Schneider D."/>
            <person name="Tourret J."/>
            <person name="Vacherie B."/>
            <person name="Vallenet D."/>
            <person name="Medigue C."/>
            <person name="Rocha E.P.C."/>
            <person name="Denamur E."/>
        </authorList>
    </citation>
    <scope>NUCLEOTIDE SEQUENCE [LARGE SCALE GENOMIC DNA]</scope>
    <source>
        <strain>55989 / EAEC</strain>
    </source>
</reference>
<dbReference type="EC" id="2.5.1.39" evidence="1"/>
<dbReference type="EMBL" id="CU928145">
    <property type="protein sequence ID" value="CAV01323.1"/>
    <property type="molecule type" value="Genomic_DNA"/>
</dbReference>
<dbReference type="RefSeq" id="WP_000455228.1">
    <property type="nucleotide sequence ID" value="NC_011748.1"/>
</dbReference>
<dbReference type="SMR" id="B7LAY8"/>
<dbReference type="GeneID" id="75204184"/>
<dbReference type="KEGG" id="eck:EC55989_4532"/>
<dbReference type="HOGENOM" id="CLU_034879_1_0_6"/>
<dbReference type="UniPathway" id="UPA00232"/>
<dbReference type="Proteomes" id="UP000000746">
    <property type="component" value="Chromosome"/>
</dbReference>
<dbReference type="GO" id="GO:0005886">
    <property type="term" value="C:plasma membrane"/>
    <property type="evidence" value="ECO:0007669"/>
    <property type="project" value="UniProtKB-SubCell"/>
</dbReference>
<dbReference type="GO" id="GO:0008412">
    <property type="term" value="F:4-hydroxybenzoate polyprenyltransferase activity"/>
    <property type="evidence" value="ECO:0007669"/>
    <property type="project" value="UniProtKB-UniRule"/>
</dbReference>
<dbReference type="GO" id="GO:0006744">
    <property type="term" value="P:ubiquinone biosynthetic process"/>
    <property type="evidence" value="ECO:0007669"/>
    <property type="project" value="UniProtKB-UniRule"/>
</dbReference>
<dbReference type="CDD" id="cd13959">
    <property type="entry name" value="PT_UbiA_COQ2"/>
    <property type="match status" value="1"/>
</dbReference>
<dbReference type="FunFam" id="1.10.357.140:FF:000002">
    <property type="entry name" value="4-hydroxybenzoate octaprenyltransferase"/>
    <property type="match status" value="1"/>
</dbReference>
<dbReference type="FunFam" id="1.20.120.1780:FF:000001">
    <property type="entry name" value="4-hydroxybenzoate octaprenyltransferase"/>
    <property type="match status" value="1"/>
</dbReference>
<dbReference type="Gene3D" id="1.10.357.140">
    <property type="entry name" value="UbiA prenyltransferase"/>
    <property type="match status" value="1"/>
</dbReference>
<dbReference type="Gene3D" id="1.20.120.1780">
    <property type="entry name" value="UbiA prenyltransferase"/>
    <property type="match status" value="1"/>
</dbReference>
<dbReference type="HAMAP" id="MF_01635">
    <property type="entry name" value="UbiA"/>
    <property type="match status" value="1"/>
</dbReference>
<dbReference type="InterPro" id="IPR006370">
    <property type="entry name" value="HB_polyprenyltransferase-like"/>
</dbReference>
<dbReference type="InterPro" id="IPR039653">
    <property type="entry name" value="Prenyltransferase"/>
</dbReference>
<dbReference type="InterPro" id="IPR000537">
    <property type="entry name" value="UbiA_prenyltransferase"/>
</dbReference>
<dbReference type="InterPro" id="IPR030470">
    <property type="entry name" value="UbiA_prenylTrfase_CS"/>
</dbReference>
<dbReference type="InterPro" id="IPR044878">
    <property type="entry name" value="UbiA_sf"/>
</dbReference>
<dbReference type="NCBIfam" id="TIGR01474">
    <property type="entry name" value="ubiA_proteo"/>
    <property type="match status" value="1"/>
</dbReference>
<dbReference type="PANTHER" id="PTHR11048:SF28">
    <property type="entry name" value="4-HYDROXYBENZOATE POLYPRENYLTRANSFERASE, MITOCHONDRIAL"/>
    <property type="match status" value="1"/>
</dbReference>
<dbReference type="PANTHER" id="PTHR11048">
    <property type="entry name" value="PRENYLTRANSFERASES"/>
    <property type="match status" value="1"/>
</dbReference>
<dbReference type="Pfam" id="PF01040">
    <property type="entry name" value="UbiA"/>
    <property type="match status" value="1"/>
</dbReference>
<dbReference type="PROSITE" id="PS00943">
    <property type="entry name" value="UBIA"/>
    <property type="match status" value="1"/>
</dbReference>
<accession>B7LAY8</accession>
<proteinExistence type="inferred from homology"/>
<gene>
    <name evidence="1" type="primary">ubiA</name>
    <name type="ordered locus">EC55989_4532</name>
</gene>
<keyword id="KW-0997">Cell inner membrane</keyword>
<keyword id="KW-1003">Cell membrane</keyword>
<keyword id="KW-0460">Magnesium</keyword>
<keyword id="KW-0472">Membrane</keyword>
<keyword id="KW-1185">Reference proteome</keyword>
<keyword id="KW-0808">Transferase</keyword>
<keyword id="KW-0812">Transmembrane</keyword>
<keyword id="KW-1133">Transmembrane helix</keyword>
<keyword id="KW-0831">Ubiquinone biosynthesis</keyword>
<organism>
    <name type="scientific">Escherichia coli (strain 55989 / EAEC)</name>
    <dbReference type="NCBI Taxonomy" id="585055"/>
    <lineage>
        <taxon>Bacteria</taxon>
        <taxon>Pseudomonadati</taxon>
        <taxon>Pseudomonadota</taxon>
        <taxon>Gammaproteobacteria</taxon>
        <taxon>Enterobacterales</taxon>
        <taxon>Enterobacteriaceae</taxon>
        <taxon>Escherichia</taxon>
    </lineage>
</organism>
<feature type="chain" id="PRO_1000186665" description="4-hydroxybenzoate octaprenyltransferase">
    <location>
        <begin position="1"/>
        <end position="290"/>
    </location>
</feature>
<feature type="transmembrane region" description="Helical" evidence="1">
    <location>
        <begin position="23"/>
        <end position="43"/>
    </location>
</feature>
<feature type="transmembrane region" description="Helical" evidence="1">
    <location>
        <begin position="46"/>
        <end position="66"/>
    </location>
</feature>
<feature type="transmembrane region" description="Helical" evidence="1">
    <location>
        <begin position="99"/>
        <end position="119"/>
    </location>
</feature>
<feature type="transmembrane region" description="Helical" evidence="1">
    <location>
        <begin position="141"/>
        <end position="161"/>
    </location>
</feature>
<feature type="transmembrane region" description="Helical" evidence="1">
    <location>
        <begin position="163"/>
        <end position="183"/>
    </location>
</feature>
<feature type="transmembrane region" description="Helical" evidence="1">
    <location>
        <begin position="213"/>
        <end position="233"/>
    </location>
</feature>
<feature type="transmembrane region" description="Helical" evidence="1">
    <location>
        <begin position="234"/>
        <end position="254"/>
    </location>
</feature>
<feature type="transmembrane region" description="Helical" evidence="1">
    <location>
        <begin position="268"/>
        <end position="288"/>
    </location>
</feature>
<sequence>MEWSLTQNKLLAFHRLMRTDKPIGALLLLWPTLWALWVATPGVPQLWILAVFVAGVWLMRAAGCVVNDYADRKFDGHVKRTANRPLPSGAVTEKEARALFVVLVLISFLLVLTLNTMTILLSIAALALAWVYPFMKRYTHLPQVVLGAAFGWSIPMAFAAVSESVPLSCWLMFLANILWAVAYDTQYAMVDRDDDVKIGIKSTAILFGQYDKLIIGILQIGVLALMAIIGELNGLGWGYYWSIVVAGALFVYQQKLIANREREACFKAFMNNNYVGLVLFLGLAMSYWHF</sequence>
<name>UBIA_ECO55</name>
<evidence type="ECO:0000255" key="1">
    <source>
        <dbReference type="HAMAP-Rule" id="MF_01635"/>
    </source>
</evidence>
<comment type="function">
    <text evidence="1">Catalyzes the prenylation of para-hydroxybenzoate (PHB) with an all-trans polyprenyl group. Mediates the second step in the final reaction sequence of ubiquinone-8 (UQ-8) biosynthesis, which is the condensation of the polyisoprenoid side chain with PHB, generating the first membrane-bound Q intermediate 3-octaprenyl-4-hydroxybenzoate.</text>
</comment>
<comment type="catalytic activity">
    <reaction evidence="1">
        <text>all-trans-octaprenyl diphosphate + 4-hydroxybenzoate = 4-hydroxy-3-(all-trans-octaprenyl)benzoate + diphosphate</text>
        <dbReference type="Rhea" id="RHEA:27782"/>
        <dbReference type="ChEBI" id="CHEBI:1617"/>
        <dbReference type="ChEBI" id="CHEBI:17879"/>
        <dbReference type="ChEBI" id="CHEBI:33019"/>
        <dbReference type="ChEBI" id="CHEBI:57711"/>
        <dbReference type="EC" id="2.5.1.39"/>
    </reaction>
</comment>
<comment type="cofactor">
    <cofactor evidence="1">
        <name>Mg(2+)</name>
        <dbReference type="ChEBI" id="CHEBI:18420"/>
    </cofactor>
</comment>
<comment type="pathway">
    <text evidence="1">Cofactor biosynthesis; ubiquinone biosynthesis.</text>
</comment>
<comment type="subcellular location">
    <subcellularLocation>
        <location evidence="1">Cell inner membrane</location>
        <topology evidence="1">Multi-pass membrane protein</topology>
    </subcellularLocation>
</comment>
<comment type="similarity">
    <text evidence="1">Belongs to the UbiA prenyltransferase family.</text>
</comment>
<protein>
    <recommendedName>
        <fullName evidence="1">4-hydroxybenzoate octaprenyltransferase</fullName>
        <ecNumber evidence="1">2.5.1.39</ecNumber>
    </recommendedName>
    <alternativeName>
        <fullName evidence="1">4-HB polyprenyltransferase</fullName>
    </alternativeName>
</protein>